<dbReference type="SMR" id="P62544"/>
<dbReference type="GO" id="GO:0005576">
    <property type="term" value="C:extracellular region"/>
    <property type="evidence" value="ECO:0007669"/>
    <property type="project" value="UniProtKB-SubCell"/>
</dbReference>
<dbReference type="GO" id="GO:0042742">
    <property type="term" value="P:defense response to bacterium"/>
    <property type="evidence" value="ECO:0007669"/>
    <property type="project" value="UniProtKB-KW"/>
</dbReference>
<dbReference type="InterPro" id="IPR010000">
    <property type="entry name" value="Caerin_1"/>
</dbReference>
<dbReference type="Pfam" id="PF07440">
    <property type="entry name" value="Caerin_1"/>
    <property type="match status" value="1"/>
</dbReference>
<reference key="1">
    <citation type="journal article" date="1993" name="J. Chem. Res.">
        <title>Peptides from Australian frogs. The structures of the caerins and caeridins from Litoria gilleni.</title>
        <authorList>
            <person name="Waugh R.J."/>
            <person name="Stone D.J.M."/>
            <person name="Bowie J.H."/>
            <person name="Wallace J.C."/>
            <person name="Tyler M.J."/>
        </authorList>
    </citation>
    <scope>PROTEIN SEQUENCE</scope>
    <scope>AMIDATION AT LEU-25</scope>
    <scope>MASS SPECTROMETRY</scope>
    <source>
        <tissue>Parotoid gland</tissue>
    </source>
</reference>
<keyword id="KW-0027">Amidation</keyword>
<keyword id="KW-0878">Amphibian defense peptide</keyword>
<keyword id="KW-0044">Antibiotic</keyword>
<keyword id="KW-0929">Antimicrobial</keyword>
<keyword id="KW-0903">Direct protein sequencing</keyword>
<keyword id="KW-0964">Secreted</keyword>
<protein>
    <recommendedName>
        <fullName>Caerin-1.4</fullName>
    </recommendedName>
    <component>
        <recommendedName>
            <fullName>Caerin-1.4.1</fullName>
        </recommendedName>
    </component>
</protein>
<proteinExistence type="evidence at protein level"/>
<sequence length="25" mass="2603">GLLSSLSSVAKHVLPHVVPVIAEHL</sequence>
<comment type="function">
    <text>Antibacterial peptide, that adopts an alpha helical conformation which can disrupt bacterial membranes. Each caerin displays a different antimicrobial specificity.</text>
</comment>
<comment type="subcellular location">
    <subcellularLocation>
        <location>Secreted</location>
    </subcellularLocation>
</comment>
<comment type="tissue specificity">
    <text>Expressed by the skin parotoid and/or rostral glands.</text>
</comment>
<comment type="domain">
    <text evidence="1">Contains two amphipathic alpha helix regions separated by a region of less-defined helicity and greater flexibility.</text>
</comment>
<comment type="mass spectrometry" mass="933.0" method="FAB" evidence="2">
    <molecule>Caerin-1.4.1</molecule>
</comment>
<comment type="similarity">
    <text evidence="3">Belongs to the frog skin active peptide (FSAP) family. Caerin subfamily.</text>
</comment>
<name>CR14_RANGI</name>
<evidence type="ECO:0000250" key="1"/>
<evidence type="ECO:0000269" key="2">
    <source ref="1"/>
</evidence>
<evidence type="ECO:0000305" key="3"/>
<organism>
    <name type="scientific">Ranoidea gilleni</name>
    <name type="common">Centralian tree frog</name>
    <name type="synonym">Litoria gilleni</name>
    <dbReference type="NCBI Taxonomy" id="39405"/>
    <lineage>
        <taxon>Eukaryota</taxon>
        <taxon>Metazoa</taxon>
        <taxon>Chordata</taxon>
        <taxon>Craniata</taxon>
        <taxon>Vertebrata</taxon>
        <taxon>Euteleostomi</taxon>
        <taxon>Amphibia</taxon>
        <taxon>Batrachia</taxon>
        <taxon>Anura</taxon>
        <taxon>Neobatrachia</taxon>
        <taxon>Hyloidea</taxon>
        <taxon>Hylidae</taxon>
        <taxon>Pelodryadinae</taxon>
        <taxon>Ranoidea</taxon>
    </lineage>
</organism>
<feature type="peptide" id="PRO_0000010176" description="Caerin-1.4">
    <location>
        <begin position="1"/>
        <end position="25"/>
    </location>
</feature>
<feature type="peptide" id="PRO_0000010177" description="Caerin-1.4.1">
    <location>
        <begin position="1"/>
        <end position="10"/>
    </location>
</feature>
<feature type="modified residue" description="Leucine amide" evidence="2">
    <location>
        <position position="25"/>
    </location>
</feature>
<accession>P62544</accession>
<accession>P56229</accession>